<sequence length="221" mass="24891">MIVVLAESALELVPRELWNHPVIQADAKRRGKKPGEILLDRARHHLAMSSLRDASKRGRPDIVHQVLLVFQYSLLNKRGLGRIYIHTQGDYTIYVRWETRIPKNYNNFVSLMEQLYATGRVPPKGEPLIELYKKDLSTLLRELGGRWVVLHESGVKKPFIELGAALLNSVVVIGGFPHGDFTNKWVLEKADAIYKIGDETMDAAQVVYRAITAAEVAAGLL</sequence>
<organism>
    <name type="scientific">Pyrobaculum islandicum (strain DSM 4184 / JCM 9189 / GEO3)</name>
    <dbReference type="NCBI Taxonomy" id="384616"/>
    <lineage>
        <taxon>Archaea</taxon>
        <taxon>Thermoproteota</taxon>
        <taxon>Thermoprotei</taxon>
        <taxon>Thermoproteales</taxon>
        <taxon>Thermoproteaceae</taxon>
        <taxon>Pyrobaculum</taxon>
    </lineage>
</organism>
<name>NEP1_PYRIL</name>
<dbReference type="EC" id="2.1.1.-" evidence="1"/>
<dbReference type="EMBL" id="CP000504">
    <property type="protein sequence ID" value="ABL88952.1"/>
    <property type="molecule type" value="Genomic_DNA"/>
</dbReference>
<dbReference type="RefSeq" id="WP_011763527.1">
    <property type="nucleotide sequence ID" value="NC_008701.1"/>
</dbReference>
<dbReference type="SMR" id="A1RVH0"/>
<dbReference type="STRING" id="384616.Pisl_1803"/>
<dbReference type="GeneID" id="4617695"/>
<dbReference type="KEGG" id="pis:Pisl_1803"/>
<dbReference type="eggNOG" id="arCOG04122">
    <property type="taxonomic scope" value="Archaea"/>
</dbReference>
<dbReference type="HOGENOM" id="CLU_055846_1_3_2"/>
<dbReference type="OrthoDB" id="7612at2157"/>
<dbReference type="Proteomes" id="UP000002595">
    <property type="component" value="Chromosome"/>
</dbReference>
<dbReference type="GO" id="GO:0070037">
    <property type="term" value="F:rRNA (pseudouridine) methyltransferase activity"/>
    <property type="evidence" value="ECO:0007669"/>
    <property type="project" value="UniProtKB-UniRule"/>
</dbReference>
<dbReference type="GO" id="GO:0019843">
    <property type="term" value="F:rRNA binding"/>
    <property type="evidence" value="ECO:0007669"/>
    <property type="project" value="UniProtKB-UniRule"/>
</dbReference>
<dbReference type="GO" id="GO:0070475">
    <property type="term" value="P:rRNA base methylation"/>
    <property type="evidence" value="ECO:0007669"/>
    <property type="project" value="InterPro"/>
</dbReference>
<dbReference type="CDD" id="cd18088">
    <property type="entry name" value="Nep1-like"/>
    <property type="match status" value="1"/>
</dbReference>
<dbReference type="Gene3D" id="3.40.1280.10">
    <property type="match status" value="1"/>
</dbReference>
<dbReference type="HAMAP" id="MF_00554">
    <property type="entry name" value="NEP1"/>
    <property type="match status" value="1"/>
</dbReference>
<dbReference type="InterPro" id="IPR029028">
    <property type="entry name" value="Alpha/beta_knot_MTases"/>
</dbReference>
<dbReference type="InterPro" id="IPR005304">
    <property type="entry name" value="Rbsml_bgen_MeTrfase_EMG1/NEP1"/>
</dbReference>
<dbReference type="InterPro" id="IPR023503">
    <property type="entry name" value="Ribosome_NEP1_arc"/>
</dbReference>
<dbReference type="InterPro" id="IPR029026">
    <property type="entry name" value="tRNA_m1G_MTases_N"/>
</dbReference>
<dbReference type="PANTHER" id="PTHR12636">
    <property type="entry name" value="NEP1/MRA1"/>
    <property type="match status" value="1"/>
</dbReference>
<dbReference type="PANTHER" id="PTHR12636:SF5">
    <property type="entry name" value="RIBOSOMAL RNA SMALL SUBUNIT METHYLTRANSFERASE NEP1"/>
    <property type="match status" value="1"/>
</dbReference>
<dbReference type="Pfam" id="PF03587">
    <property type="entry name" value="EMG1"/>
    <property type="match status" value="1"/>
</dbReference>
<dbReference type="SUPFAM" id="SSF75217">
    <property type="entry name" value="alpha/beta knot"/>
    <property type="match status" value="1"/>
</dbReference>
<protein>
    <recommendedName>
        <fullName evidence="1">Ribosomal RNA small subunit methyltransferase Nep1</fullName>
        <ecNumber evidence="1">2.1.1.-</ecNumber>
    </recommendedName>
    <alternativeName>
        <fullName evidence="1">16S rRNA (pseudouridine-N1-)-methyltransferase Nep1</fullName>
    </alternativeName>
</protein>
<feature type="chain" id="PRO_1000017930" description="Ribosomal RNA small subunit methyltransferase Nep1">
    <location>
        <begin position="1"/>
        <end position="221"/>
    </location>
</feature>
<feature type="binding site" evidence="1">
    <location>
        <position position="174"/>
    </location>
    <ligand>
        <name>S-adenosyl-L-methionine</name>
        <dbReference type="ChEBI" id="CHEBI:59789"/>
    </ligand>
</feature>
<feature type="binding site" evidence="1">
    <location>
        <position position="179"/>
    </location>
    <ligand>
        <name>S-adenosyl-L-methionine</name>
        <dbReference type="ChEBI" id="CHEBI:59789"/>
    </ligand>
</feature>
<feature type="binding site" evidence="1">
    <location>
        <begin position="196"/>
        <end position="201"/>
    </location>
    <ligand>
        <name>S-adenosyl-L-methionine</name>
        <dbReference type="ChEBI" id="CHEBI:59789"/>
    </ligand>
</feature>
<feature type="site" description="Interaction with substrate rRNA" evidence="1">
    <location>
        <position position="59"/>
    </location>
</feature>
<feature type="site" description="Stabilizes Arg-59" evidence="1">
    <location>
        <position position="61"/>
    </location>
</feature>
<feature type="site" description="Interaction with substrate rRNA" evidence="1">
    <location>
        <position position="100"/>
    </location>
</feature>
<feature type="site" description="Interaction with substrate rRNA" evidence="1">
    <location>
        <position position="103"/>
    </location>
</feature>
<feature type="site" description="Interaction with substrate rRNA" evidence="1">
    <location>
        <position position="107"/>
    </location>
</feature>
<evidence type="ECO:0000255" key="1">
    <source>
        <dbReference type="HAMAP-Rule" id="MF_00554"/>
    </source>
</evidence>
<evidence type="ECO:0000305" key="2"/>
<keyword id="KW-0489">Methyltransferase</keyword>
<keyword id="KW-0690">Ribosome biogenesis</keyword>
<keyword id="KW-0694">RNA-binding</keyword>
<keyword id="KW-0698">rRNA processing</keyword>
<keyword id="KW-0699">rRNA-binding</keyword>
<keyword id="KW-0949">S-adenosyl-L-methionine</keyword>
<keyword id="KW-0808">Transferase</keyword>
<comment type="function">
    <text evidence="1">Methyltransferase involved in ribosomal biogenesis. Specifically catalyzes the N1-methylation of the pseudouridine corresponding to position 914 in M.jannaschii 16S rRNA.</text>
</comment>
<comment type="catalytic activity">
    <reaction evidence="1">
        <text>a pseudouridine in rRNA + S-adenosyl-L-methionine = an N(1)-methylpseudouridine in rRNA + S-adenosyl-L-homocysteine + H(+)</text>
        <dbReference type="Rhea" id="RHEA:46696"/>
        <dbReference type="Rhea" id="RHEA-COMP:11634"/>
        <dbReference type="Rhea" id="RHEA-COMP:13933"/>
        <dbReference type="ChEBI" id="CHEBI:15378"/>
        <dbReference type="ChEBI" id="CHEBI:57856"/>
        <dbReference type="ChEBI" id="CHEBI:59789"/>
        <dbReference type="ChEBI" id="CHEBI:65314"/>
        <dbReference type="ChEBI" id="CHEBI:74890"/>
    </reaction>
</comment>
<comment type="subunit">
    <text evidence="1">Homodimer.</text>
</comment>
<comment type="similarity">
    <text evidence="2">Belongs to the class IV-like SAM-binding methyltransferase superfamily. RNA methyltransferase NEP1 family.</text>
</comment>
<gene>
    <name evidence="1" type="primary">nep1</name>
    <name type="ordered locus">Pisl_1803</name>
</gene>
<proteinExistence type="inferred from homology"/>
<accession>A1RVH0</accession>
<reference key="1">
    <citation type="submission" date="2006-12" db="EMBL/GenBank/DDBJ databases">
        <title>Complete sequence of Pyrobaculum islandicum DSM 4184.</title>
        <authorList>
            <person name="Copeland A."/>
            <person name="Lucas S."/>
            <person name="Lapidus A."/>
            <person name="Barry K."/>
            <person name="Detter J.C."/>
            <person name="Glavina del Rio T."/>
            <person name="Dalin E."/>
            <person name="Tice H."/>
            <person name="Pitluck S."/>
            <person name="Meincke L."/>
            <person name="Brettin T."/>
            <person name="Bruce D."/>
            <person name="Han C."/>
            <person name="Tapia R."/>
            <person name="Gilna P."/>
            <person name="Schmutz J."/>
            <person name="Larimer F."/>
            <person name="Land M."/>
            <person name="Hauser L."/>
            <person name="Kyrpides N."/>
            <person name="Mikhailova N."/>
            <person name="Cozen A.E."/>
            <person name="Fitz-Gibbon S.T."/>
            <person name="House C.H."/>
            <person name="Saltikov C."/>
            <person name="Lowe T."/>
            <person name="Richardson P."/>
        </authorList>
    </citation>
    <scope>NUCLEOTIDE SEQUENCE [LARGE SCALE GENOMIC DNA]</scope>
    <source>
        <strain>DSM 4184 / JCM 9189 / GEO3</strain>
    </source>
</reference>